<proteinExistence type="inferred from homology"/>
<feature type="signal peptide" evidence="2">
    <location>
        <begin position="1"/>
        <end position="26"/>
    </location>
</feature>
<feature type="chain" id="PRO_0000285673" description="Uncharacterized protein C6orf15 homolog">
    <location>
        <begin position="27"/>
        <end position="347"/>
    </location>
</feature>
<feature type="region of interest" description="Disordered" evidence="3">
    <location>
        <begin position="41"/>
        <end position="110"/>
    </location>
</feature>
<feature type="region of interest" description="Disordered" evidence="3">
    <location>
        <begin position="148"/>
        <end position="189"/>
    </location>
</feature>
<feature type="compositionally biased region" description="Polar residues" evidence="3">
    <location>
        <begin position="41"/>
        <end position="60"/>
    </location>
</feature>
<feature type="compositionally biased region" description="Low complexity" evidence="3">
    <location>
        <begin position="148"/>
        <end position="157"/>
    </location>
</feature>
<sequence length="347" mass="36686">MQGRVAGSCAPLGLLLVCLHLPGLFARSIGVVEEKVSQNLGTNLPQLGQPSSTGPSNSEHPQPALDPRSNDLARVPLKLSAPPSDGFPPAGGSAVQRWPPSWGLPAMDSWPPEDPWQMMAAAAEDRLGEALPEELSYLSSAVALAPGSGPLPGESSPDATGLSPEASLLHQDSESRRLPRSNSLGAGGKILSQRPPWSLIHRVLPDHPWGTLNPSVSWGGGGPGTGWGTRPMPHPEGIWGINNQPPGTSWGNINRYPGGSWGNINRYPGDSWGNNNRYPGGSWGNINRYPGGSWGNINRYPGGSWGNIHLYPGINNPFPPGVLRPPGSSWNIPAGFPNPPSPRLQWG</sequence>
<comment type="subunit">
    <text evidence="1">Binds to numerous extracellular matrix proteins.</text>
</comment>
<comment type="subcellular location">
    <subcellularLocation>
        <location evidence="1">Secreted</location>
        <location evidence="1">Extracellular space</location>
        <location evidence="1">Extracellular matrix</location>
    </subcellularLocation>
</comment>
<keyword id="KW-0272">Extracellular matrix</keyword>
<keyword id="KW-1185">Reference proteome</keyword>
<keyword id="KW-0964">Secreted</keyword>
<keyword id="KW-0732">Signal</keyword>
<reference key="1">
    <citation type="journal article" date="2006" name="Genetics">
        <title>Rapid evolution of major histocompatibility complex class I genes in primates generates new disease alleles in humans via hitchhiking diversity.</title>
        <authorList>
            <person name="Shiina T."/>
            <person name="Ota M."/>
            <person name="Shimizu S."/>
            <person name="Katsuyama Y."/>
            <person name="Hashimoto N."/>
            <person name="Takasu M."/>
            <person name="Anzai T."/>
            <person name="Kulski J.K."/>
            <person name="Kikkawa E."/>
            <person name="Naruse T."/>
            <person name="Kimura N."/>
            <person name="Yanagiya K."/>
            <person name="Watanabe A."/>
            <person name="Hosomichi K."/>
            <person name="Kohara S."/>
            <person name="Iwamoto C."/>
            <person name="Umehara Y."/>
            <person name="Meyer A."/>
            <person name="Wanner V."/>
            <person name="Sano K."/>
            <person name="Macquin C."/>
            <person name="Ikeo K."/>
            <person name="Tokunaga K."/>
            <person name="Gojobori T."/>
            <person name="Inoko H."/>
            <person name="Bahram S."/>
        </authorList>
    </citation>
    <scope>NUCLEOTIDE SEQUENCE [LARGE SCALE GENOMIC DNA]</scope>
</reference>
<name>CF015_PANTR</name>
<evidence type="ECO:0000250" key="1"/>
<evidence type="ECO:0000255" key="2"/>
<evidence type="ECO:0000256" key="3">
    <source>
        <dbReference type="SAM" id="MobiDB-lite"/>
    </source>
</evidence>
<dbReference type="EMBL" id="AB210147">
    <property type="protein sequence ID" value="BAE92753.1"/>
    <property type="molecule type" value="Genomic_DNA"/>
</dbReference>
<dbReference type="EMBL" id="AB210148">
    <property type="protein sequence ID" value="BAE92757.1"/>
    <property type="molecule type" value="Genomic_DNA"/>
</dbReference>
<dbReference type="RefSeq" id="NP_001129211.1">
    <property type="nucleotide sequence ID" value="NM_001135739.1"/>
</dbReference>
<dbReference type="STRING" id="9598.ENSPTRP00000054574"/>
<dbReference type="GeneID" id="100190903"/>
<dbReference type="KEGG" id="ptr:100190903"/>
<dbReference type="CTD" id="101005354"/>
<dbReference type="eggNOG" id="ENOG502SDN4">
    <property type="taxonomic scope" value="Eukaryota"/>
</dbReference>
<dbReference type="InParanoid" id="Q1XI13"/>
<dbReference type="OrthoDB" id="13789at9604"/>
<dbReference type="Proteomes" id="UP000002277">
    <property type="component" value="Unplaced"/>
</dbReference>
<dbReference type="GO" id="GO:0031012">
    <property type="term" value="C:extracellular matrix"/>
    <property type="evidence" value="ECO:0000318"/>
    <property type="project" value="GO_Central"/>
</dbReference>
<dbReference type="GO" id="GO:0005576">
    <property type="term" value="C:extracellular region"/>
    <property type="evidence" value="ECO:0007669"/>
    <property type="project" value="UniProtKB-KW"/>
</dbReference>
<dbReference type="GO" id="GO:0030198">
    <property type="term" value="P:extracellular matrix organization"/>
    <property type="evidence" value="ECO:0000318"/>
    <property type="project" value="GO_Central"/>
</dbReference>
<dbReference type="InterPro" id="IPR026135">
    <property type="entry name" value="C6orf15"/>
</dbReference>
<dbReference type="PANTHER" id="PTHR15817:SF2">
    <property type="entry name" value="SIMILAR TO RIKEN CDNA 2300002M23"/>
    <property type="match status" value="1"/>
</dbReference>
<dbReference type="PANTHER" id="PTHR15817">
    <property type="entry name" value="STG PROTEIN"/>
    <property type="match status" value="1"/>
</dbReference>
<dbReference type="Pfam" id="PF15809">
    <property type="entry name" value="STG"/>
    <property type="match status" value="2"/>
</dbReference>
<accession>Q1XI13</accession>
<organism>
    <name type="scientific">Pan troglodytes</name>
    <name type="common">Chimpanzee</name>
    <dbReference type="NCBI Taxonomy" id="9598"/>
    <lineage>
        <taxon>Eukaryota</taxon>
        <taxon>Metazoa</taxon>
        <taxon>Chordata</taxon>
        <taxon>Craniata</taxon>
        <taxon>Vertebrata</taxon>
        <taxon>Euteleostomi</taxon>
        <taxon>Mammalia</taxon>
        <taxon>Eutheria</taxon>
        <taxon>Euarchontoglires</taxon>
        <taxon>Primates</taxon>
        <taxon>Haplorrhini</taxon>
        <taxon>Catarrhini</taxon>
        <taxon>Hominidae</taxon>
        <taxon>Pan</taxon>
    </lineage>
</organism>
<gene>
    <name type="primary">STG</name>
</gene>
<protein>
    <recommendedName>
        <fullName>Uncharacterized protein C6orf15 homolog</fullName>
    </recommendedName>
    <alternativeName>
        <fullName>Protein STG</fullName>
    </alternativeName>
</protein>